<protein>
    <recommendedName>
        <fullName evidence="1">Enolase 1</fullName>
        <ecNumber evidence="1">4.2.1.11</ecNumber>
    </recommendedName>
    <alternativeName>
        <fullName evidence="1">2-phospho-D-glycerate hydro-lyase 1</fullName>
    </alternativeName>
    <alternativeName>
        <fullName evidence="1">2-phosphoglycerate dehydratase 1</fullName>
    </alternativeName>
</protein>
<accession>Q9F2Q3</accession>
<dbReference type="EC" id="4.2.1.11" evidence="1"/>
<dbReference type="EMBL" id="AL939115">
    <property type="protein sequence ID" value="CAC09537.1"/>
    <property type="molecule type" value="Genomic_DNA"/>
</dbReference>
<dbReference type="RefSeq" id="NP_627314.1">
    <property type="nucleotide sequence ID" value="NC_003888.3"/>
</dbReference>
<dbReference type="SMR" id="Q9F2Q3"/>
<dbReference type="FunCoup" id="Q9F2Q3">
    <property type="interactions" value="430"/>
</dbReference>
<dbReference type="STRING" id="100226.gene:17760712"/>
<dbReference type="PaxDb" id="100226-SCO3096"/>
<dbReference type="KEGG" id="sco:SCO3096"/>
<dbReference type="PATRIC" id="fig|100226.15.peg.3158"/>
<dbReference type="eggNOG" id="COG0148">
    <property type="taxonomic scope" value="Bacteria"/>
</dbReference>
<dbReference type="HOGENOM" id="CLU_031223_2_1_11"/>
<dbReference type="InParanoid" id="Q9F2Q3"/>
<dbReference type="OrthoDB" id="9804716at2"/>
<dbReference type="PhylomeDB" id="Q9F2Q3"/>
<dbReference type="UniPathway" id="UPA00109">
    <property type="reaction ID" value="UER00187"/>
</dbReference>
<dbReference type="Proteomes" id="UP000001973">
    <property type="component" value="Chromosome"/>
</dbReference>
<dbReference type="GO" id="GO:0009986">
    <property type="term" value="C:cell surface"/>
    <property type="evidence" value="ECO:0007669"/>
    <property type="project" value="UniProtKB-SubCell"/>
</dbReference>
<dbReference type="GO" id="GO:0005576">
    <property type="term" value="C:extracellular region"/>
    <property type="evidence" value="ECO:0007669"/>
    <property type="project" value="UniProtKB-SubCell"/>
</dbReference>
<dbReference type="GO" id="GO:0000015">
    <property type="term" value="C:phosphopyruvate hydratase complex"/>
    <property type="evidence" value="ECO:0000318"/>
    <property type="project" value="GO_Central"/>
</dbReference>
<dbReference type="GO" id="GO:0000287">
    <property type="term" value="F:magnesium ion binding"/>
    <property type="evidence" value="ECO:0007669"/>
    <property type="project" value="UniProtKB-UniRule"/>
</dbReference>
<dbReference type="GO" id="GO:0004634">
    <property type="term" value="F:phosphopyruvate hydratase activity"/>
    <property type="evidence" value="ECO:0000318"/>
    <property type="project" value="GO_Central"/>
</dbReference>
<dbReference type="GO" id="GO:0006096">
    <property type="term" value="P:glycolytic process"/>
    <property type="evidence" value="ECO:0000318"/>
    <property type="project" value="GO_Central"/>
</dbReference>
<dbReference type="CDD" id="cd03313">
    <property type="entry name" value="enolase"/>
    <property type="match status" value="1"/>
</dbReference>
<dbReference type="FunFam" id="3.20.20.120:FF:000001">
    <property type="entry name" value="Enolase"/>
    <property type="match status" value="1"/>
</dbReference>
<dbReference type="FunFam" id="3.30.390.10:FF:000001">
    <property type="entry name" value="Enolase"/>
    <property type="match status" value="1"/>
</dbReference>
<dbReference type="Gene3D" id="3.20.20.120">
    <property type="entry name" value="Enolase-like C-terminal domain"/>
    <property type="match status" value="1"/>
</dbReference>
<dbReference type="Gene3D" id="3.30.390.10">
    <property type="entry name" value="Enolase-like, N-terminal domain"/>
    <property type="match status" value="1"/>
</dbReference>
<dbReference type="HAMAP" id="MF_00318">
    <property type="entry name" value="Enolase"/>
    <property type="match status" value="1"/>
</dbReference>
<dbReference type="InterPro" id="IPR000941">
    <property type="entry name" value="Enolase"/>
</dbReference>
<dbReference type="InterPro" id="IPR036849">
    <property type="entry name" value="Enolase-like_C_sf"/>
</dbReference>
<dbReference type="InterPro" id="IPR029017">
    <property type="entry name" value="Enolase-like_N"/>
</dbReference>
<dbReference type="InterPro" id="IPR020810">
    <property type="entry name" value="Enolase_C"/>
</dbReference>
<dbReference type="InterPro" id="IPR020809">
    <property type="entry name" value="Enolase_CS"/>
</dbReference>
<dbReference type="InterPro" id="IPR020811">
    <property type="entry name" value="Enolase_N"/>
</dbReference>
<dbReference type="NCBIfam" id="TIGR01060">
    <property type="entry name" value="eno"/>
    <property type="match status" value="1"/>
</dbReference>
<dbReference type="PANTHER" id="PTHR11902">
    <property type="entry name" value="ENOLASE"/>
    <property type="match status" value="1"/>
</dbReference>
<dbReference type="PANTHER" id="PTHR11902:SF1">
    <property type="entry name" value="ENOLASE"/>
    <property type="match status" value="1"/>
</dbReference>
<dbReference type="Pfam" id="PF00113">
    <property type="entry name" value="Enolase_C"/>
    <property type="match status" value="1"/>
</dbReference>
<dbReference type="Pfam" id="PF03952">
    <property type="entry name" value="Enolase_N"/>
    <property type="match status" value="1"/>
</dbReference>
<dbReference type="PIRSF" id="PIRSF001400">
    <property type="entry name" value="Enolase"/>
    <property type="match status" value="1"/>
</dbReference>
<dbReference type="PRINTS" id="PR00148">
    <property type="entry name" value="ENOLASE"/>
</dbReference>
<dbReference type="SFLD" id="SFLDF00002">
    <property type="entry name" value="enolase"/>
    <property type="match status" value="1"/>
</dbReference>
<dbReference type="SFLD" id="SFLDG00178">
    <property type="entry name" value="enolase"/>
    <property type="match status" value="1"/>
</dbReference>
<dbReference type="SMART" id="SM01192">
    <property type="entry name" value="Enolase_C"/>
    <property type="match status" value="1"/>
</dbReference>
<dbReference type="SMART" id="SM01193">
    <property type="entry name" value="Enolase_N"/>
    <property type="match status" value="1"/>
</dbReference>
<dbReference type="SUPFAM" id="SSF51604">
    <property type="entry name" value="Enolase C-terminal domain-like"/>
    <property type="match status" value="1"/>
</dbReference>
<dbReference type="SUPFAM" id="SSF54826">
    <property type="entry name" value="Enolase N-terminal domain-like"/>
    <property type="match status" value="1"/>
</dbReference>
<dbReference type="PROSITE" id="PS00164">
    <property type="entry name" value="ENOLASE"/>
    <property type="match status" value="1"/>
</dbReference>
<comment type="function">
    <text evidence="1">Catalyzes the reversible conversion of 2-phosphoglycerate (2-PG) into phosphoenolpyruvate (PEP). It is essential for the degradation of carbohydrates via glycolysis.</text>
</comment>
<comment type="catalytic activity">
    <reaction evidence="1">
        <text>(2R)-2-phosphoglycerate = phosphoenolpyruvate + H2O</text>
        <dbReference type="Rhea" id="RHEA:10164"/>
        <dbReference type="ChEBI" id="CHEBI:15377"/>
        <dbReference type="ChEBI" id="CHEBI:58289"/>
        <dbReference type="ChEBI" id="CHEBI:58702"/>
        <dbReference type="EC" id="4.2.1.11"/>
    </reaction>
</comment>
<comment type="cofactor">
    <cofactor evidence="1">
        <name>Mg(2+)</name>
        <dbReference type="ChEBI" id="CHEBI:18420"/>
    </cofactor>
    <text evidence="1">Binds a second Mg(2+) ion via substrate during catalysis.</text>
</comment>
<comment type="pathway">
    <text evidence="1">Carbohydrate degradation; glycolysis; pyruvate from D-glyceraldehyde 3-phosphate: step 4/5.</text>
</comment>
<comment type="subcellular location">
    <subcellularLocation>
        <location evidence="1">Cytoplasm</location>
    </subcellularLocation>
    <subcellularLocation>
        <location evidence="1">Secreted</location>
    </subcellularLocation>
    <subcellularLocation>
        <location evidence="1">Cell surface</location>
    </subcellularLocation>
    <text evidence="1">Fractions of enolase are present in both the cytoplasm and on the cell surface.</text>
</comment>
<comment type="similarity">
    <text evidence="1">Belongs to the enolase family.</text>
</comment>
<sequence>MPSIDVVVAREILDSRGNPTVEVEVGLDDGSTGRAAVPSGASTGAFEAIELRDGDPSRYLGKGVEKAVLAVIEQIGPELVGYDATEQRLIDQAMFDLDATDNKGSLGANAILGVSLAVAHAASEASDLPLFRYLGGPNAHLLPVPMMNILNGGSHADSNVDIQEFMIAPIGAESFSEALRWGAEVYHTLKKVLKNKGLATGLGDEGGFAPNLGSNREALDLILEAIKEAGYTPGEQIALALDVAASEFYKDGSYAFEGKNRSAAEMTEYYAELVEAYPLVSIEDPLFEDDWDGWNTITAKLGDKVQLVGDDLFVTNPERLARGIEENSANALLVKVNQIGSLTETLDAVELAQRNGFKCMMSHRSGETEDVTIADLAVATNCGQIKTGAPARSERVAKYNQLLRIEEILDDAAVYAGRSAFPRFKG</sequence>
<name>ENO1_STRCO</name>
<gene>
    <name evidence="1" type="primary">eno1</name>
    <name type="ordered locus">SCO3096</name>
    <name type="ORF">SCE41.05c</name>
</gene>
<evidence type="ECO:0000255" key="1">
    <source>
        <dbReference type="HAMAP-Rule" id="MF_00318"/>
    </source>
</evidence>
<feature type="chain" id="PRO_0000133976" description="Enolase 1">
    <location>
        <begin position="1"/>
        <end position="426"/>
    </location>
</feature>
<feature type="active site" description="Proton donor" evidence="1">
    <location>
        <position position="205"/>
    </location>
</feature>
<feature type="active site" description="Proton acceptor" evidence="1">
    <location>
        <position position="335"/>
    </location>
</feature>
<feature type="binding site" evidence="1">
    <location>
        <position position="163"/>
    </location>
    <ligand>
        <name>(2R)-2-phosphoglycerate</name>
        <dbReference type="ChEBI" id="CHEBI:58289"/>
    </ligand>
</feature>
<feature type="binding site" evidence="1">
    <location>
        <position position="242"/>
    </location>
    <ligand>
        <name>Mg(2+)</name>
        <dbReference type="ChEBI" id="CHEBI:18420"/>
    </ligand>
</feature>
<feature type="binding site" evidence="1">
    <location>
        <position position="283"/>
    </location>
    <ligand>
        <name>Mg(2+)</name>
        <dbReference type="ChEBI" id="CHEBI:18420"/>
    </ligand>
</feature>
<feature type="binding site" evidence="1">
    <location>
        <position position="310"/>
    </location>
    <ligand>
        <name>Mg(2+)</name>
        <dbReference type="ChEBI" id="CHEBI:18420"/>
    </ligand>
</feature>
<feature type="binding site" evidence="1">
    <location>
        <position position="335"/>
    </location>
    <ligand>
        <name>(2R)-2-phosphoglycerate</name>
        <dbReference type="ChEBI" id="CHEBI:58289"/>
    </ligand>
</feature>
<feature type="binding site" evidence="1">
    <location>
        <position position="364"/>
    </location>
    <ligand>
        <name>(2R)-2-phosphoglycerate</name>
        <dbReference type="ChEBI" id="CHEBI:58289"/>
    </ligand>
</feature>
<feature type="binding site" evidence="1">
    <location>
        <position position="365"/>
    </location>
    <ligand>
        <name>(2R)-2-phosphoglycerate</name>
        <dbReference type="ChEBI" id="CHEBI:58289"/>
    </ligand>
</feature>
<feature type="binding site" evidence="1">
    <location>
        <position position="386"/>
    </location>
    <ligand>
        <name>(2R)-2-phosphoglycerate</name>
        <dbReference type="ChEBI" id="CHEBI:58289"/>
    </ligand>
</feature>
<reference key="1">
    <citation type="journal article" date="2002" name="Nature">
        <title>Complete genome sequence of the model actinomycete Streptomyces coelicolor A3(2).</title>
        <authorList>
            <person name="Bentley S.D."/>
            <person name="Chater K.F."/>
            <person name="Cerdeno-Tarraga A.-M."/>
            <person name="Challis G.L."/>
            <person name="Thomson N.R."/>
            <person name="James K.D."/>
            <person name="Harris D.E."/>
            <person name="Quail M.A."/>
            <person name="Kieser H."/>
            <person name="Harper D."/>
            <person name="Bateman A."/>
            <person name="Brown S."/>
            <person name="Chandra G."/>
            <person name="Chen C.W."/>
            <person name="Collins M."/>
            <person name="Cronin A."/>
            <person name="Fraser A."/>
            <person name="Goble A."/>
            <person name="Hidalgo J."/>
            <person name="Hornsby T."/>
            <person name="Howarth S."/>
            <person name="Huang C.-H."/>
            <person name="Kieser T."/>
            <person name="Larke L."/>
            <person name="Murphy L.D."/>
            <person name="Oliver K."/>
            <person name="O'Neil S."/>
            <person name="Rabbinowitsch E."/>
            <person name="Rajandream M.A."/>
            <person name="Rutherford K.M."/>
            <person name="Rutter S."/>
            <person name="Seeger K."/>
            <person name="Saunders D."/>
            <person name="Sharp S."/>
            <person name="Squares R."/>
            <person name="Squares S."/>
            <person name="Taylor K."/>
            <person name="Warren T."/>
            <person name="Wietzorrek A."/>
            <person name="Woodward J.R."/>
            <person name="Barrell B.G."/>
            <person name="Parkhill J."/>
            <person name="Hopwood D.A."/>
        </authorList>
    </citation>
    <scope>NUCLEOTIDE SEQUENCE [LARGE SCALE GENOMIC DNA]</scope>
    <source>
        <strain>ATCC BAA-471 / A3(2) / M145</strain>
    </source>
</reference>
<organism>
    <name type="scientific">Streptomyces coelicolor (strain ATCC BAA-471 / A3(2) / M145)</name>
    <dbReference type="NCBI Taxonomy" id="100226"/>
    <lineage>
        <taxon>Bacteria</taxon>
        <taxon>Bacillati</taxon>
        <taxon>Actinomycetota</taxon>
        <taxon>Actinomycetes</taxon>
        <taxon>Kitasatosporales</taxon>
        <taxon>Streptomycetaceae</taxon>
        <taxon>Streptomyces</taxon>
        <taxon>Streptomyces albidoflavus group</taxon>
    </lineage>
</organism>
<proteinExistence type="inferred from homology"/>
<keyword id="KW-0963">Cytoplasm</keyword>
<keyword id="KW-0324">Glycolysis</keyword>
<keyword id="KW-0456">Lyase</keyword>
<keyword id="KW-0460">Magnesium</keyword>
<keyword id="KW-0479">Metal-binding</keyword>
<keyword id="KW-1185">Reference proteome</keyword>
<keyword id="KW-0964">Secreted</keyword>